<sequence length="299" mass="33245">MLDNTRLRIAIQKSGRLSDDSRELLARCGIKINLHTQRLIAMAENMPIDILRVRDDDIPGLVMDGVVDLGIIGENVLEEELLNRRAQGEDPRYFTLRRLDFGGCRLSLATPVDEAWDGPAALDGKRIATSYPHLLKRYLDQKGVSFKSCLLNGSVEVAPRAGLADAICDLVSTGATLEANGLREVEVIYRSKACLIQRDGEMAQSKQQLIDKLLTRIQGVIQARESKYIMMHAPSERLEEVIALLPGAERPTILPLAGEQQRVAMHMVSSETLFWETMEKLKALGASSILVLPIEKMME</sequence>
<proteinExistence type="inferred from homology"/>
<protein>
    <recommendedName>
        <fullName evidence="1">ATP phosphoribosyltransferase</fullName>
        <shortName evidence="1">ATP-PRT</shortName>
        <shortName evidence="1">ATP-PRTase</shortName>
        <ecNumber evidence="1">2.4.2.17</ecNumber>
    </recommendedName>
</protein>
<gene>
    <name evidence="1" type="primary">hisG</name>
    <name type="ordered locus">SNSL254_A2250</name>
</gene>
<organism>
    <name type="scientific">Salmonella newport (strain SL254)</name>
    <dbReference type="NCBI Taxonomy" id="423368"/>
    <lineage>
        <taxon>Bacteria</taxon>
        <taxon>Pseudomonadati</taxon>
        <taxon>Pseudomonadota</taxon>
        <taxon>Gammaproteobacteria</taxon>
        <taxon>Enterobacterales</taxon>
        <taxon>Enterobacteriaceae</taxon>
        <taxon>Salmonella</taxon>
    </lineage>
</organism>
<dbReference type="EC" id="2.4.2.17" evidence="1"/>
<dbReference type="EMBL" id="CP001113">
    <property type="protein sequence ID" value="ACF65042.1"/>
    <property type="molecule type" value="Genomic_DNA"/>
</dbReference>
<dbReference type="RefSeq" id="WP_000886600.1">
    <property type="nucleotide sequence ID" value="NZ_CCMR01000002.1"/>
</dbReference>
<dbReference type="SMR" id="B4SX40"/>
<dbReference type="KEGG" id="see:SNSL254_A2250"/>
<dbReference type="HOGENOM" id="CLU_038115_1_0_6"/>
<dbReference type="UniPathway" id="UPA00031">
    <property type="reaction ID" value="UER00006"/>
</dbReference>
<dbReference type="Proteomes" id="UP000008824">
    <property type="component" value="Chromosome"/>
</dbReference>
<dbReference type="GO" id="GO:0005737">
    <property type="term" value="C:cytoplasm"/>
    <property type="evidence" value="ECO:0007669"/>
    <property type="project" value="UniProtKB-SubCell"/>
</dbReference>
<dbReference type="GO" id="GO:0005524">
    <property type="term" value="F:ATP binding"/>
    <property type="evidence" value="ECO:0007669"/>
    <property type="project" value="UniProtKB-KW"/>
</dbReference>
<dbReference type="GO" id="GO:0003879">
    <property type="term" value="F:ATP phosphoribosyltransferase activity"/>
    <property type="evidence" value="ECO:0007669"/>
    <property type="project" value="UniProtKB-UniRule"/>
</dbReference>
<dbReference type="GO" id="GO:0000287">
    <property type="term" value="F:magnesium ion binding"/>
    <property type="evidence" value="ECO:0007669"/>
    <property type="project" value="UniProtKB-UniRule"/>
</dbReference>
<dbReference type="GO" id="GO:0000105">
    <property type="term" value="P:L-histidine biosynthetic process"/>
    <property type="evidence" value="ECO:0007669"/>
    <property type="project" value="UniProtKB-UniRule"/>
</dbReference>
<dbReference type="CDD" id="cd13592">
    <property type="entry name" value="PBP2_HisGL2"/>
    <property type="match status" value="1"/>
</dbReference>
<dbReference type="FunFam" id="3.30.70.120:FF:000002">
    <property type="entry name" value="ATP phosphoribosyltransferase"/>
    <property type="match status" value="1"/>
</dbReference>
<dbReference type="FunFam" id="3.40.190.10:FF:000008">
    <property type="entry name" value="ATP phosphoribosyltransferase"/>
    <property type="match status" value="1"/>
</dbReference>
<dbReference type="Gene3D" id="3.30.70.120">
    <property type="match status" value="1"/>
</dbReference>
<dbReference type="Gene3D" id="3.40.190.10">
    <property type="entry name" value="Periplasmic binding protein-like II"/>
    <property type="match status" value="2"/>
</dbReference>
<dbReference type="HAMAP" id="MF_00079">
    <property type="entry name" value="HisG_Long"/>
    <property type="match status" value="1"/>
</dbReference>
<dbReference type="InterPro" id="IPR020621">
    <property type="entry name" value="ATP-PRT_HisG_long"/>
</dbReference>
<dbReference type="InterPro" id="IPR013820">
    <property type="entry name" value="ATP_PRibTrfase_cat"/>
</dbReference>
<dbReference type="InterPro" id="IPR018198">
    <property type="entry name" value="ATP_PRibTrfase_CS"/>
</dbReference>
<dbReference type="InterPro" id="IPR001348">
    <property type="entry name" value="ATP_PRibTrfase_HisG"/>
</dbReference>
<dbReference type="InterPro" id="IPR013115">
    <property type="entry name" value="HisG_C"/>
</dbReference>
<dbReference type="InterPro" id="IPR011322">
    <property type="entry name" value="N-reg_PII-like_a/b"/>
</dbReference>
<dbReference type="InterPro" id="IPR015867">
    <property type="entry name" value="N-reg_PII/ATP_PRibTrfase_C"/>
</dbReference>
<dbReference type="NCBIfam" id="TIGR00070">
    <property type="entry name" value="hisG"/>
    <property type="match status" value="1"/>
</dbReference>
<dbReference type="NCBIfam" id="TIGR03455">
    <property type="entry name" value="HisG_C-term"/>
    <property type="match status" value="1"/>
</dbReference>
<dbReference type="PANTHER" id="PTHR21403:SF8">
    <property type="entry name" value="ATP PHOSPHORIBOSYLTRANSFERASE"/>
    <property type="match status" value="1"/>
</dbReference>
<dbReference type="PANTHER" id="PTHR21403">
    <property type="entry name" value="ATP PHOSPHORIBOSYLTRANSFERASE ATP-PRTASE"/>
    <property type="match status" value="1"/>
</dbReference>
<dbReference type="Pfam" id="PF01634">
    <property type="entry name" value="HisG"/>
    <property type="match status" value="1"/>
</dbReference>
<dbReference type="Pfam" id="PF08029">
    <property type="entry name" value="HisG_C"/>
    <property type="match status" value="1"/>
</dbReference>
<dbReference type="SUPFAM" id="SSF54913">
    <property type="entry name" value="GlnB-like"/>
    <property type="match status" value="1"/>
</dbReference>
<dbReference type="SUPFAM" id="SSF53850">
    <property type="entry name" value="Periplasmic binding protein-like II"/>
    <property type="match status" value="1"/>
</dbReference>
<dbReference type="PROSITE" id="PS01316">
    <property type="entry name" value="ATP_P_PHORIBOSYLTR"/>
    <property type="match status" value="1"/>
</dbReference>
<comment type="function">
    <text evidence="1">Catalyzes the condensation of ATP and 5-phosphoribose 1-diphosphate to form N'-(5'-phosphoribosyl)-ATP (PR-ATP). Has a crucial role in the pathway because the rate of histidine biosynthesis seems to be controlled primarily by regulation of HisG enzymatic activity.</text>
</comment>
<comment type="catalytic activity">
    <reaction evidence="1">
        <text>1-(5-phospho-beta-D-ribosyl)-ATP + diphosphate = 5-phospho-alpha-D-ribose 1-diphosphate + ATP</text>
        <dbReference type="Rhea" id="RHEA:18473"/>
        <dbReference type="ChEBI" id="CHEBI:30616"/>
        <dbReference type="ChEBI" id="CHEBI:33019"/>
        <dbReference type="ChEBI" id="CHEBI:58017"/>
        <dbReference type="ChEBI" id="CHEBI:73183"/>
        <dbReference type="EC" id="2.4.2.17"/>
    </reaction>
</comment>
<comment type="cofactor">
    <cofactor evidence="1">
        <name>Mg(2+)</name>
        <dbReference type="ChEBI" id="CHEBI:18420"/>
    </cofactor>
</comment>
<comment type="activity regulation">
    <text evidence="1">Feedback inhibited by histidine.</text>
</comment>
<comment type="pathway">
    <text evidence="1">Amino-acid biosynthesis; L-histidine biosynthesis; L-histidine from 5-phospho-alpha-D-ribose 1-diphosphate: step 1/9.</text>
</comment>
<comment type="subunit">
    <text evidence="1">Equilibrium between an active dimeric form, an inactive hexameric form and higher aggregates. Interconversion between the various forms is largely reversible and is influenced by the natural substrates and inhibitors of the enzyme.</text>
</comment>
<comment type="subcellular location">
    <subcellularLocation>
        <location evidence="1">Cytoplasm</location>
    </subcellularLocation>
</comment>
<comment type="similarity">
    <text evidence="1">Belongs to the ATP phosphoribosyltransferase family. Long subfamily.</text>
</comment>
<reference key="1">
    <citation type="journal article" date="2011" name="J. Bacteriol.">
        <title>Comparative genomics of 28 Salmonella enterica isolates: evidence for CRISPR-mediated adaptive sublineage evolution.</title>
        <authorList>
            <person name="Fricke W.F."/>
            <person name="Mammel M.K."/>
            <person name="McDermott P.F."/>
            <person name="Tartera C."/>
            <person name="White D.G."/>
            <person name="Leclerc J.E."/>
            <person name="Ravel J."/>
            <person name="Cebula T.A."/>
        </authorList>
    </citation>
    <scope>NUCLEOTIDE SEQUENCE [LARGE SCALE GENOMIC DNA]</scope>
    <source>
        <strain>SL254</strain>
    </source>
</reference>
<feature type="chain" id="PRO_1000092749" description="ATP phosphoribosyltransferase">
    <location>
        <begin position="1"/>
        <end position="299"/>
    </location>
</feature>
<evidence type="ECO:0000255" key="1">
    <source>
        <dbReference type="HAMAP-Rule" id="MF_00079"/>
    </source>
</evidence>
<accession>B4SX40</accession>
<keyword id="KW-0028">Amino-acid biosynthesis</keyword>
<keyword id="KW-0067">ATP-binding</keyword>
<keyword id="KW-0963">Cytoplasm</keyword>
<keyword id="KW-0328">Glycosyltransferase</keyword>
<keyword id="KW-0368">Histidine biosynthesis</keyword>
<keyword id="KW-0460">Magnesium</keyword>
<keyword id="KW-0479">Metal-binding</keyword>
<keyword id="KW-0547">Nucleotide-binding</keyword>
<keyword id="KW-0808">Transferase</keyword>
<name>HIS1_SALNS</name>